<reference key="1">
    <citation type="journal article" date="2003" name="Mol. Microbiol.">
        <title>Genome-based analysis of virulence genes in a non-biofilm-forming Staphylococcus epidermidis strain (ATCC 12228).</title>
        <authorList>
            <person name="Zhang Y.-Q."/>
            <person name="Ren S.-X."/>
            <person name="Li H.-L."/>
            <person name="Wang Y.-X."/>
            <person name="Fu G."/>
            <person name="Yang J."/>
            <person name="Qin Z.-Q."/>
            <person name="Miao Y.-G."/>
            <person name="Wang W.-Y."/>
            <person name="Chen R.-S."/>
            <person name="Shen Y."/>
            <person name="Chen Z."/>
            <person name="Yuan Z.-H."/>
            <person name="Zhao G.-P."/>
            <person name="Qu D."/>
            <person name="Danchin A."/>
            <person name="Wen Y.-M."/>
        </authorList>
    </citation>
    <scope>NUCLEOTIDE SEQUENCE [LARGE SCALE GENOMIC DNA]</scope>
    <source>
        <strain>ATCC 12228 / FDA PCI 1200</strain>
    </source>
</reference>
<feature type="chain" id="PRO_0000100646" description="Adenosine 5'-phosphosulfate reductase">
    <location>
        <begin position="1"/>
        <end position="243"/>
    </location>
</feature>
<feature type="active site" description="Nucleophile; cysteine thiosulfonate intermediate" evidence="1">
    <location>
        <position position="235"/>
    </location>
</feature>
<feature type="binding site" evidence="1">
    <location>
        <position position="126"/>
    </location>
    <ligand>
        <name>[4Fe-4S] cluster</name>
        <dbReference type="ChEBI" id="CHEBI:49883"/>
    </ligand>
</feature>
<feature type="binding site" evidence="1">
    <location>
        <position position="127"/>
    </location>
    <ligand>
        <name>[4Fe-4S] cluster</name>
        <dbReference type="ChEBI" id="CHEBI:49883"/>
    </ligand>
</feature>
<feature type="binding site" evidence="1">
    <location>
        <position position="209"/>
    </location>
    <ligand>
        <name>[4Fe-4S] cluster</name>
        <dbReference type="ChEBI" id="CHEBI:49883"/>
    </ligand>
</feature>
<feature type="binding site" evidence="1">
    <location>
        <position position="212"/>
    </location>
    <ligand>
        <name>[4Fe-4S] cluster</name>
        <dbReference type="ChEBI" id="CHEBI:49883"/>
    </ligand>
</feature>
<protein>
    <recommendedName>
        <fullName evidence="1">Adenosine 5'-phosphosulfate reductase</fullName>
        <shortName evidence="1">APS reductase</shortName>
        <ecNumber evidence="1">1.8.4.10</ecNumber>
    </recommendedName>
    <alternativeName>
        <fullName evidence="1">5'-adenylylsulfate reductase</fullName>
    </alternativeName>
    <alternativeName>
        <fullName evidence="1">Thioredoxin-dependent 5'-adenylylsulfate reductase</fullName>
    </alternativeName>
</protein>
<sequence>MSIERITYDNFQNDPFINELDINDETKGAYEILKWAYQTYENDIVYSCSFGAESMVLIDLISQIKPDAQIVFLDTDLHFQETYDLIDRVKDKYPQLRIKMKKPELTLEEQGEKYNPALWKNDPNQCCYIRKIKPLEDVLSGAVAWISGLRRAQSPTRAHTNFINKDERFKSIKVCPLIYWTEEEVWSYIRDKDLPYNELHDQNYPSIGCIPCTSPVFDSNDSRAGRWSNSSKTECGLHVADKP</sequence>
<comment type="function">
    <text evidence="1">Catalyzes the formation of sulfite from adenosine 5'-phosphosulfate (APS) using thioredoxin as an electron donor.</text>
</comment>
<comment type="catalytic activity">
    <reaction evidence="1">
        <text>[thioredoxin]-disulfide + sulfite + AMP + 2 H(+) = adenosine 5'-phosphosulfate + [thioredoxin]-dithiol</text>
        <dbReference type="Rhea" id="RHEA:21976"/>
        <dbReference type="Rhea" id="RHEA-COMP:10698"/>
        <dbReference type="Rhea" id="RHEA-COMP:10700"/>
        <dbReference type="ChEBI" id="CHEBI:15378"/>
        <dbReference type="ChEBI" id="CHEBI:17359"/>
        <dbReference type="ChEBI" id="CHEBI:29950"/>
        <dbReference type="ChEBI" id="CHEBI:50058"/>
        <dbReference type="ChEBI" id="CHEBI:58243"/>
        <dbReference type="ChEBI" id="CHEBI:456215"/>
        <dbReference type="EC" id="1.8.4.10"/>
    </reaction>
</comment>
<comment type="cofactor">
    <cofactor evidence="1">
        <name>[4Fe-4S] cluster</name>
        <dbReference type="ChEBI" id="CHEBI:49883"/>
    </cofactor>
    <text evidence="1">Binds 1 [4Fe-4S] cluster per subunit.</text>
</comment>
<comment type="pathway">
    <text evidence="1">Sulfur metabolism; hydrogen sulfide biosynthesis; sulfite from sulfate.</text>
</comment>
<comment type="subcellular location">
    <subcellularLocation>
        <location evidence="1">Cytoplasm</location>
    </subcellularLocation>
</comment>
<comment type="similarity">
    <text evidence="1">Belongs to the PAPS reductase family. CysH subfamily.</text>
</comment>
<accession>Q8CMX3</accession>
<evidence type="ECO:0000255" key="1">
    <source>
        <dbReference type="HAMAP-Rule" id="MF_00063"/>
    </source>
</evidence>
<proteinExistence type="inferred from homology"/>
<dbReference type="EC" id="1.8.4.10" evidence="1"/>
<dbReference type="EMBL" id="AE015929">
    <property type="protein sequence ID" value="AAO05823.1"/>
    <property type="molecule type" value="Genomic_DNA"/>
</dbReference>
<dbReference type="RefSeq" id="NP_765736.1">
    <property type="nucleotide sequence ID" value="NC_004461.1"/>
</dbReference>
<dbReference type="RefSeq" id="WP_001830661.1">
    <property type="nucleotide sequence ID" value="NZ_WBME01000005.1"/>
</dbReference>
<dbReference type="SMR" id="Q8CMX3"/>
<dbReference type="KEGG" id="sep:SE_2181"/>
<dbReference type="PATRIC" id="fig|176280.10.peg.2130"/>
<dbReference type="eggNOG" id="COG0175">
    <property type="taxonomic scope" value="Bacteria"/>
</dbReference>
<dbReference type="HOGENOM" id="CLU_044089_2_1_9"/>
<dbReference type="OrthoDB" id="9772604at2"/>
<dbReference type="Proteomes" id="UP000001411">
    <property type="component" value="Chromosome"/>
</dbReference>
<dbReference type="GO" id="GO:0005737">
    <property type="term" value="C:cytoplasm"/>
    <property type="evidence" value="ECO:0007669"/>
    <property type="project" value="UniProtKB-SubCell"/>
</dbReference>
<dbReference type="GO" id="GO:0051539">
    <property type="term" value="F:4 iron, 4 sulfur cluster binding"/>
    <property type="evidence" value="ECO:0007669"/>
    <property type="project" value="UniProtKB-UniRule"/>
</dbReference>
<dbReference type="GO" id="GO:0043866">
    <property type="term" value="F:adenylyl-sulfate reductase (thioredoxin) activity"/>
    <property type="evidence" value="ECO:0007669"/>
    <property type="project" value="UniProtKB-EC"/>
</dbReference>
<dbReference type="GO" id="GO:0046872">
    <property type="term" value="F:metal ion binding"/>
    <property type="evidence" value="ECO:0007669"/>
    <property type="project" value="UniProtKB-KW"/>
</dbReference>
<dbReference type="GO" id="GO:0004604">
    <property type="term" value="F:phosphoadenylyl-sulfate reductase (thioredoxin) activity"/>
    <property type="evidence" value="ECO:0007669"/>
    <property type="project" value="UniProtKB-UniRule"/>
</dbReference>
<dbReference type="GO" id="GO:0019344">
    <property type="term" value="P:cysteine biosynthetic process"/>
    <property type="evidence" value="ECO:0007669"/>
    <property type="project" value="InterPro"/>
</dbReference>
<dbReference type="GO" id="GO:0070814">
    <property type="term" value="P:hydrogen sulfide biosynthetic process"/>
    <property type="evidence" value="ECO:0007669"/>
    <property type="project" value="UniProtKB-UniRule"/>
</dbReference>
<dbReference type="GO" id="GO:0019379">
    <property type="term" value="P:sulfate assimilation, phosphoadenylyl sulfate reduction by phosphoadenylyl-sulfate reductase (thioredoxin)"/>
    <property type="evidence" value="ECO:0007669"/>
    <property type="project" value="UniProtKB-UniRule"/>
</dbReference>
<dbReference type="CDD" id="cd23945">
    <property type="entry name" value="PAPS_reductase"/>
    <property type="match status" value="1"/>
</dbReference>
<dbReference type="FunFam" id="3.40.50.620:FF:000095">
    <property type="entry name" value="Phosphoadenosine phosphosulfate reductase"/>
    <property type="match status" value="1"/>
</dbReference>
<dbReference type="Gene3D" id="3.40.50.620">
    <property type="entry name" value="HUPs"/>
    <property type="match status" value="1"/>
</dbReference>
<dbReference type="HAMAP" id="MF_00063">
    <property type="entry name" value="CysH"/>
    <property type="match status" value="1"/>
</dbReference>
<dbReference type="InterPro" id="IPR011798">
    <property type="entry name" value="APS_reductase"/>
</dbReference>
<dbReference type="InterPro" id="IPR004511">
    <property type="entry name" value="PAPS/APS_Rdtase"/>
</dbReference>
<dbReference type="InterPro" id="IPR002500">
    <property type="entry name" value="PAPS_reduct_dom"/>
</dbReference>
<dbReference type="InterPro" id="IPR014729">
    <property type="entry name" value="Rossmann-like_a/b/a_fold"/>
</dbReference>
<dbReference type="NCBIfam" id="TIGR02055">
    <property type="entry name" value="APS_reductase"/>
    <property type="match status" value="1"/>
</dbReference>
<dbReference type="NCBIfam" id="TIGR00434">
    <property type="entry name" value="cysH"/>
    <property type="match status" value="1"/>
</dbReference>
<dbReference type="NCBIfam" id="NF002537">
    <property type="entry name" value="PRK02090.1"/>
    <property type="match status" value="1"/>
</dbReference>
<dbReference type="PANTHER" id="PTHR46509">
    <property type="entry name" value="PHOSPHOADENOSINE PHOSPHOSULFATE REDUCTASE"/>
    <property type="match status" value="1"/>
</dbReference>
<dbReference type="PANTHER" id="PTHR46509:SF1">
    <property type="entry name" value="PHOSPHOADENOSINE PHOSPHOSULFATE REDUCTASE"/>
    <property type="match status" value="1"/>
</dbReference>
<dbReference type="Pfam" id="PF01507">
    <property type="entry name" value="PAPS_reduct"/>
    <property type="match status" value="1"/>
</dbReference>
<dbReference type="PIRSF" id="PIRSF000857">
    <property type="entry name" value="PAPS_reductase"/>
    <property type="match status" value="1"/>
</dbReference>
<dbReference type="SUPFAM" id="SSF52402">
    <property type="entry name" value="Adenine nucleotide alpha hydrolases-like"/>
    <property type="match status" value="1"/>
</dbReference>
<keyword id="KW-0963">Cytoplasm</keyword>
<keyword id="KW-0408">Iron</keyword>
<keyword id="KW-0411">Iron-sulfur</keyword>
<keyword id="KW-0479">Metal-binding</keyword>
<keyword id="KW-0560">Oxidoreductase</keyword>
<name>CYSH_STAES</name>
<gene>
    <name evidence="1" type="primary">cysH</name>
    <name type="ordered locus">SE_2181</name>
</gene>
<organism>
    <name type="scientific">Staphylococcus epidermidis (strain ATCC 12228 / FDA PCI 1200)</name>
    <dbReference type="NCBI Taxonomy" id="176280"/>
    <lineage>
        <taxon>Bacteria</taxon>
        <taxon>Bacillati</taxon>
        <taxon>Bacillota</taxon>
        <taxon>Bacilli</taxon>
        <taxon>Bacillales</taxon>
        <taxon>Staphylococcaceae</taxon>
        <taxon>Staphylococcus</taxon>
    </lineage>
</organism>